<reference key="1">
    <citation type="submission" date="2006-11" db="EMBL/GenBank/DDBJ databases">
        <title>Identification and characterization of a new conjugation/ type IVA secretion system (trb/tra) of L. pneumophila Corby localized on a mobile genomic island.</title>
        <authorList>
            <person name="Gloeckner G."/>
            <person name="Albert-Weissenberger C."/>
            <person name="Weinmann E."/>
            <person name="Jacobi S."/>
            <person name="Schunder E."/>
            <person name="Steinert M."/>
            <person name="Buchrieser C."/>
            <person name="Hacker J."/>
            <person name="Heuner K."/>
        </authorList>
    </citation>
    <scope>NUCLEOTIDE SEQUENCE [LARGE SCALE GENOMIC DNA]</scope>
    <source>
        <strain>Corby</strain>
    </source>
</reference>
<name>DER_LEGPC</name>
<feature type="chain" id="PRO_1000011655" description="GTPase Der">
    <location>
        <begin position="1"/>
        <end position="462"/>
    </location>
</feature>
<feature type="domain" description="EngA-type G 1">
    <location>
        <begin position="3"/>
        <end position="166"/>
    </location>
</feature>
<feature type="domain" description="EngA-type G 2">
    <location>
        <begin position="175"/>
        <end position="348"/>
    </location>
</feature>
<feature type="domain" description="KH-like" evidence="1">
    <location>
        <begin position="349"/>
        <end position="433"/>
    </location>
</feature>
<feature type="binding site" evidence="1">
    <location>
        <begin position="9"/>
        <end position="16"/>
    </location>
    <ligand>
        <name>GTP</name>
        <dbReference type="ChEBI" id="CHEBI:37565"/>
        <label>1</label>
    </ligand>
</feature>
<feature type="binding site" evidence="1">
    <location>
        <begin position="56"/>
        <end position="60"/>
    </location>
    <ligand>
        <name>GTP</name>
        <dbReference type="ChEBI" id="CHEBI:37565"/>
        <label>1</label>
    </ligand>
</feature>
<feature type="binding site" evidence="1">
    <location>
        <begin position="118"/>
        <end position="121"/>
    </location>
    <ligand>
        <name>GTP</name>
        <dbReference type="ChEBI" id="CHEBI:37565"/>
        <label>1</label>
    </ligand>
</feature>
<feature type="binding site" evidence="1">
    <location>
        <begin position="181"/>
        <end position="188"/>
    </location>
    <ligand>
        <name>GTP</name>
        <dbReference type="ChEBI" id="CHEBI:37565"/>
        <label>2</label>
    </ligand>
</feature>
<feature type="binding site" evidence="1">
    <location>
        <begin position="228"/>
        <end position="232"/>
    </location>
    <ligand>
        <name>GTP</name>
        <dbReference type="ChEBI" id="CHEBI:37565"/>
        <label>2</label>
    </ligand>
</feature>
<feature type="binding site" evidence="1">
    <location>
        <begin position="293"/>
        <end position="296"/>
    </location>
    <ligand>
        <name>GTP</name>
        <dbReference type="ChEBI" id="CHEBI:37565"/>
        <label>2</label>
    </ligand>
</feature>
<sequence>MIPVIALVGRPNVGKSTLFNRITKTQDALVADFPGLTRDRQYGHAQHENKSFIIVDTGGIGVDDIEVDTLMSRQSQVALNEANVILFLVDGRSGLTGIDQQIAQALRKLNKKVHLVVNKTDGMNEDIACADFQSLGITDVHAISASHGGGISSLLEEILEPFTTETHEATDDKAIKIAFAGRPNVGKSTLINRILGEERVVVYDMPGTTRDSISIPFTREDKQYVLIDTAGVRRKSRIDEKIEKFSVIKTLQAIKEAHVCLLLLDANEGITDQDMNLLGFIIESGKALVIAVNKWDGLEEDHKEKIKSELSRRLHFANFAKIRFISALHGSGVGGLFKDINEAYHSAIQSFSTPKLTRLLQDISAKHTPPCINGRRIKLRYAHLGGHNPPVIVIHGNQLDALPESYKRYLNNEFIKHLGLVGTPLKIEFKGGQNPFANKKNKLSQRQVNKKKRLMRWAKSKK</sequence>
<organism>
    <name type="scientific">Legionella pneumophila (strain Corby)</name>
    <dbReference type="NCBI Taxonomy" id="400673"/>
    <lineage>
        <taxon>Bacteria</taxon>
        <taxon>Pseudomonadati</taxon>
        <taxon>Pseudomonadota</taxon>
        <taxon>Gammaproteobacteria</taxon>
        <taxon>Legionellales</taxon>
        <taxon>Legionellaceae</taxon>
        <taxon>Legionella</taxon>
    </lineage>
</organism>
<dbReference type="EMBL" id="CP000675">
    <property type="protein sequence ID" value="ABQ54936.1"/>
    <property type="molecule type" value="Genomic_DNA"/>
</dbReference>
<dbReference type="RefSeq" id="WP_011213821.1">
    <property type="nucleotide sequence ID" value="NZ_JAPMSS010000002.1"/>
</dbReference>
<dbReference type="SMR" id="A5IC36"/>
<dbReference type="KEGG" id="lpc:LPC_0962"/>
<dbReference type="HOGENOM" id="CLU_016077_6_2_6"/>
<dbReference type="GO" id="GO:0005525">
    <property type="term" value="F:GTP binding"/>
    <property type="evidence" value="ECO:0007669"/>
    <property type="project" value="UniProtKB-UniRule"/>
</dbReference>
<dbReference type="GO" id="GO:0043022">
    <property type="term" value="F:ribosome binding"/>
    <property type="evidence" value="ECO:0007669"/>
    <property type="project" value="TreeGrafter"/>
</dbReference>
<dbReference type="GO" id="GO:0042254">
    <property type="term" value="P:ribosome biogenesis"/>
    <property type="evidence" value="ECO:0007669"/>
    <property type="project" value="UniProtKB-KW"/>
</dbReference>
<dbReference type="CDD" id="cd01894">
    <property type="entry name" value="EngA1"/>
    <property type="match status" value="1"/>
</dbReference>
<dbReference type="CDD" id="cd01895">
    <property type="entry name" value="EngA2"/>
    <property type="match status" value="1"/>
</dbReference>
<dbReference type="FunFam" id="3.30.300.20:FF:000004">
    <property type="entry name" value="GTPase Der"/>
    <property type="match status" value="1"/>
</dbReference>
<dbReference type="FunFam" id="3.40.50.300:FF:000040">
    <property type="entry name" value="GTPase Der"/>
    <property type="match status" value="1"/>
</dbReference>
<dbReference type="FunFam" id="3.40.50.300:FF:000057">
    <property type="entry name" value="GTPase Der"/>
    <property type="match status" value="1"/>
</dbReference>
<dbReference type="Gene3D" id="3.30.300.20">
    <property type="match status" value="1"/>
</dbReference>
<dbReference type="Gene3D" id="3.40.50.300">
    <property type="entry name" value="P-loop containing nucleotide triphosphate hydrolases"/>
    <property type="match status" value="2"/>
</dbReference>
<dbReference type="HAMAP" id="MF_00195">
    <property type="entry name" value="GTPase_Der"/>
    <property type="match status" value="1"/>
</dbReference>
<dbReference type="InterPro" id="IPR031166">
    <property type="entry name" value="G_ENGA"/>
</dbReference>
<dbReference type="InterPro" id="IPR006073">
    <property type="entry name" value="GTP-bd"/>
</dbReference>
<dbReference type="InterPro" id="IPR016484">
    <property type="entry name" value="GTPase_Der"/>
</dbReference>
<dbReference type="InterPro" id="IPR032859">
    <property type="entry name" value="KH_dom-like"/>
</dbReference>
<dbReference type="InterPro" id="IPR015946">
    <property type="entry name" value="KH_dom-like_a/b"/>
</dbReference>
<dbReference type="InterPro" id="IPR027417">
    <property type="entry name" value="P-loop_NTPase"/>
</dbReference>
<dbReference type="InterPro" id="IPR005225">
    <property type="entry name" value="Small_GTP-bd"/>
</dbReference>
<dbReference type="NCBIfam" id="TIGR03594">
    <property type="entry name" value="GTPase_EngA"/>
    <property type="match status" value="1"/>
</dbReference>
<dbReference type="NCBIfam" id="TIGR00231">
    <property type="entry name" value="small_GTP"/>
    <property type="match status" value="2"/>
</dbReference>
<dbReference type="PANTHER" id="PTHR43834">
    <property type="entry name" value="GTPASE DER"/>
    <property type="match status" value="1"/>
</dbReference>
<dbReference type="PANTHER" id="PTHR43834:SF6">
    <property type="entry name" value="GTPASE DER"/>
    <property type="match status" value="1"/>
</dbReference>
<dbReference type="Pfam" id="PF14714">
    <property type="entry name" value="KH_dom-like"/>
    <property type="match status" value="1"/>
</dbReference>
<dbReference type="Pfam" id="PF01926">
    <property type="entry name" value="MMR_HSR1"/>
    <property type="match status" value="2"/>
</dbReference>
<dbReference type="PIRSF" id="PIRSF006485">
    <property type="entry name" value="GTP-binding_EngA"/>
    <property type="match status" value="1"/>
</dbReference>
<dbReference type="PRINTS" id="PR00326">
    <property type="entry name" value="GTP1OBG"/>
</dbReference>
<dbReference type="SUPFAM" id="SSF52540">
    <property type="entry name" value="P-loop containing nucleoside triphosphate hydrolases"/>
    <property type="match status" value="2"/>
</dbReference>
<dbReference type="PROSITE" id="PS51712">
    <property type="entry name" value="G_ENGA"/>
    <property type="match status" value="2"/>
</dbReference>
<evidence type="ECO:0000255" key="1">
    <source>
        <dbReference type="HAMAP-Rule" id="MF_00195"/>
    </source>
</evidence>
<gene>
    <name evidence="1" type="primary">der</name>
    <name type="synonym">engA</name>
    <name type="ordered locus">LPC_0962</name>
</gene>
<accession>A5IC36</accession>
<protein>
    <recommendedName>
        <fullName evidence="1">GTPase Der</fullName>
    </recommendedName>
    <alternativeName>
        <fullName evidence="1">GTP-binding protein EngA</fullName>
    </alternativeName>
</protein>
<comment type="function">
    <text evidence="1">GTPase that plays an essential role in the late steps of ribosome biogenesis.</text>
</comment>
<comment type="subunit">
    <text evidence="1">Associates with the 50S ribosomal subunit.</text>
</comment>
<comment type="similarity">
    <text evidence="1">Belongs to the TRAFAC class TrmE-Era-EngA-EngB-Septin-like GTPase superfamily. EngA (Der) GTPase family.</text>
</comment>
<keyword id="KW-0342">GTP-binding</keyword>
<keyword id="KW-0547">Nucleotide-binding</keyword>
<keyword id="KW-0677">Repeat</keyword>
<keyword id="KW-0690">Ribosome biogenesis</keyword>
<proteinExistence type="inferred from homology"/>